<evidence type="ECO:0000250" key="1"/>
<evidence type="ECO:0000255" key="2"/>
<evidence type="ECO:0000269" key="3">
    <source>
    </source>
</evidence>
<evidence type="ECO:0000269" key="4">
    <source>
    </source>
</evidence>
<evidence type="ECO:0000305" key="5"/>
<dbReference type="EC" id="3.-.-.-"/>
<dbReference type="EMBL" id="AP012340">
    <property type="protein sequence ID" value="BAL65869.1"/>
    <property type="molecule type" value="Genomic_DNA"/>
</dbReference>
<dbReference type="SMR" id="H8F3N4"/>
<dbReference type="CAZy" id="GH23">
    <property type="family name" value="Glycoside Hydrolase Family 23"/>
</dbReference>
<dbReference type="KEGG" id="mtn:ERDMAN_2076"/>
<dbReference type="PATRIC" id="fig|652616.3.peg.2109"/>
<dbReference type="HOGENOM" id="CLU_123842_1_0_11"/>
<dbReference type="GO" id="GO:0005576">
    <property type="term" value="C:extracellular region"/>
    <property type="evidence" value="ECO:0007669"/>
    <property type="project" value="UniProtKB-SubCell"/>
</dbReference>
<dbReference type="GO" id="GO:0016787">
    <property type="term" value="F:hydrolase activity"/>
    <property type="evidence" value="ECO:0007669"/>
    <property type="project" value="UniProtKB-KW"/>
</dbReference>
<dbReference type="GO" id="GO:0010629">
    <property type="term" value="P:negative regulation of gene expression"/>
    <property type="evidence" value="ECO:0007669"/>
    <property type="project" value="UniProtKB-ARBA"/>
</dbReference>
<dbReference type="GO" id="GO:0009372">
    <property type="term" value="P:quorum sensing"/>
    <property type="evidence" value="ECO:0007669"/>
    <property type="project" value="UniProtKB-ARBA"/>
</dbReference>
<dbReference type="GO" id="GO:0042127">
    <property type="term" value="P:regulation of cell population proliferation"/>
    <property type="evidence" value="ECO:0007669"/>
    <property type="project" value="UniProtKB-ARBA"/>
</dbReference>
<dbReference type="CDD" id="cd13925">
    <property type="entry name" value="RPF"/>
    <property type="match status" value="1"/>
</dbReference>
<dbReference type="FunFam" id="1.10.530.10:FF:000025">
    <property type="entry name" value="Resuscitation-promoting factor RpfC"/>
    <property type="match status" value="1"/>
</dbReference>
<dbReference type="Gene3D" id="1.10.530.10">
    <property type="match status" value="1"/>
</dbReference>
<dbReference type="InterPro" id="IPR023346">
    <property type="entry name" value="Lysozyme-like_dom_sf"/>
</dbReference>
<dbReference type="InterPro" id="IPR010618">
    <property type="entry name" value="RPF"/>
</dbReference>
<dbReference type="NCBIfam" id="NF046107">
    <property type="entry name" value="ResusProRpfC"/>
    <property type="match status" value="1"/>
</dbReference>
<dbReference type="Pfam" id="PF06737">
    <property type="entry name" value="Transglycosylas"/>
    <property type="match status" value="1"/>
</dbReference>
<dbReference type="SUPFAM" id="SSF53955">
    <property type="entry name" value="Lysozyme-like"/>
    <property type="match status" value="1"/>
</dbReference>
<keyword id="KW-0378">Hydrolase</keyword>
<keyword id="KW-0964">Secreted</keyword>
<keyword id="KW-0732">Signal</keyword>
<accession>H8F3N4</accession>
<proteinExistence type="evidence at transcript level"/>
<reference key="1">
    <citation type="journal article" date="2012" name="J. Bacteriol.">
        <title>Complete annotated genome sequence of Mycobacterium tuberculosis Erdman.</title>
        <authorList>
            <person name="Miyoshi-Akiyama T."/>
            <person name="Matsumura K."/>
            <person name="Iwai H."/>
            <person name="Funatogawa K."/>
            <person name="Kirikae T."/>
        </authorList>
    </citation>
    <scope>NUCLEOTIDE SEQUENCE [LARGE SCALE GENOMIC DNA]</scope>
    <source>
        <strain>ATCC 35801 / TMC 107 / Erdman</strain>
    </source>
</reference>
<reference key="2">
    <citation type="journal article" date="2005" name="Nature">
        <title>Regulation of Mycobacterium tuberculosis cell envelope composition and virulence by intramembrane proteolysis.</title>
        <authorList>
            <person name="Makinoshima H."/>
            <person name="Glickman M.S."/>
        </authorList>
    </citation>
    <scope>INDUCTION</scope>
    <source>
        <strain>ATCC 35801 / TMC 107 / Erdman</strain>
    </source>
</reference>
<reference key="3">
    <citation type="journal article" date="2010" name="Mol. Microbiol.">
        <title>M. tuberculosis intramembrane protease Rip1 controls transcription through three anti-sigma factor substrates.</title>
        <authorList>
            <person name="Sklar J.G."/>
            <person name="Makinoshima H."/>
            <person name="Schneider J.S."/>
            <person name="Glickman M.S."/>
        </authorList>
    </citation>
    <scope>INDUCTION</scope>
    <source>
        <strain>ATCC 35801 / TMC 107 / Erdman</strain>
    </source>
</reference>
<gene>
    <name type="primary">rpfC</name>
    <name type="ordered locus">ERDMAN_2076</name>
</gene>
<comment type="function">
    <text evidence="1">Factor that stimulates resuscitation of dormant cells. Has peptidoglycan (PG) hydrolytic activity (By similarity).</text>
</comment>
<comment type="subcellular location">
    <subcellularLocation>
        <location evidence="5">Secreted</location>
    </subcellularLocation>
</comment>
<comment type="induction">
    <text evidence="3 4">By the metal chelator phenanthroline via Rip1.</text>
</comment>
<comment type="similarity">
    <text evidence="5">Belongs to the transglycosylase family. Rpf subfamily.</text>
</comment>
<feature type="signal peptide" evidence="2">
    <location>
        <begin position="1"/>
        <end position="31"/>
    </location>
</feature>
<feature type="chain" id="PRO_0000422691" description="Resuscitation-promoting factor RpfC">
    <location>
        <begin position="32"/>
        <end position="140"/>
    </location>
</feature>
<protein>
    <recommendedName>
        <fullName>Resuscitation-promoting factor RpfC</fullName>
        <ecNumber>3.-.-.-</ecNumber>
    </recommendedName>
</protein>
<organism>
    <name type="scientific">Mycobacterium tuberculosis (strain ATCC 35801 / TMC 107 / Erdman)</name>
    <dbReference type="NCBI Taxonomy" id="652616"/>
    <lineage>
        <taxon>Bacteria</taxon>
        <taxon>Bacillati</taxon>
        <taxon>Actinomycetota</taxon>
        <taxon>Actinomycetes</taxon>
        <taxon>Mycobacteriales</taxon>
        <taxon>Mycobacteriaceae</taxon>
        <taxon>Mycobacterium</taxon>
        <taxon>Mycobacterium tuberculosis complex</taxon>
    </lineage>
</organism>
<name>RPFC_MYCTE</name>
<sequence>MTRIAKPLIKSAMAAGLVTASMSLSTAVAHAGPSPNWDAVAQCESGGNWAANTGNGKYGGLQFKPATWAAFGGVGNPAAASREQQIAVANRVLAEQGLDAWPTCGAASGLPIALWSKPAQGIKQIINEIIWAGIQASIPR</sequence>